<comment type="function">
    <text evidence="1">Cleaves beta-linked terminal galactosyl residues from gangliosides, glycoproteins, and glycosaminoglycans.</text>
</comment>
<comment type="catalytic activity">
    <reaction>
        <text>Hydrolysis of terminal non-reducing beta-D-galactose residues in beta-D-galactosides.</text>
        <dbReference type="EC" id="3.2.1.23"/>
    </reaction>
</comment>
<comment type="subcellular location">
    <subcellularLocation>
        <location evidence="1">Secreted</location>
    </subcellularLocation>
</comment>
<comment type="similarity">
    <text evidence="3">Belongs to the glycosyl hydrolase 35 family.</text>
</comment>
<name>BGALB_SCLS1</name>
<evidence type="ECO:0000250" key="1"/>
<evidence type="ECO:0000255" key="2"/>
<evidence type="ECO:0000305" key="3"/>
<keyword id="KW-0119">Carbohydrate metabolism</keyword>
<keyword id="KW-1015">Disulfide bond</keyword>
<keyword id="KW-0325">Glycoprotein</keyword>
<keyword id="KW-0326">Glycosidase</keyword>
<keyword id="KW-0378">Hydrolase</keyword>
<keyword id="KW-0624">Polysaccharide degradation</keyword>
<keyword id="KW-1185">Reference proteome</keyword>
<keyword id="KW-0964">Secreted</keyword>
<keyword id="KW-0732">Signal</keyword>
<gene>
    <name type="primary">lacB</name>
    <name type="ORF">SS1G_02781</name>
</gene>
<feature type="signal peptide" evidence="2">
    <location>
        <begin position="1"/>
        <end position="18"/>
    </location>
</feature>
<feature type="chain" id="PRO_0000395233" description="Probable beta-galactosidase B">
    <location>
        <begin position="19"/>
        <end position="1008"/>
    </location>
</feature>
<feature type="active site" description="Proton donor" evidence="2">
    <location>
        <position position="193"/>
    </location>
</feature>
<feature type="active site" description="Nucleophile" evidence="2">
    <location>
        <position position="305"/>
    </location>
</feature>
<feature type="binding site" evidence="1">
    <location>
        <position position="87"/>
    </location>
    <ligand>
        <name>substrate</name>
    </ligand>
</feature>
<feature type="binding site" evidence="1">
    <location>
        <position position="132"/>
    </location>
    <ligand>
        <name>substrate</name>
    </ligand>
</feature>
<feature type="binding site" evidence="1">
    <location>
        <position position="133"/>
    </location>
    <ligand>
        <name>substrate</name>
    </ligand>
</feature>
<feature type="binding site" evidence="1">
    <location>
        <position position="134"/>
    </location>
    <ligand>
        <name>substrate</name>
    </ligand>
</feature>
<feature type="binding site" evidence="1">
    <location>
        <position position="192"/>
    </location>
    <ligand>
        <name>substrate</name>
    </ligand>
</feature>
<feature type="binding site" evidence="1">
    <location>
        <position position="262"/>
    </location>
    <ligand>
        <name>substrate</name>
    </ligand>
</feature>
<feature type="binding site" evidence="1">
    <location>
        <position position="370"/>
    </location>
    <ligand>
        <name>substrate</name>
    </ligand>
</feature>
<feature type="glycosylation site" description="N-linked (GlcNAc...) asparagine" evidence="2">
    <location>
        <position position="20"/>
    </location>
</feature>
<feature type="glycosylation site" description="N-linked (GlcNAc...) asparagine" evidence="2">
    <location>
        <position position="23"/>
    </location>
</feature>
<feature type="glycosylation site" description="N-linked (GlcNAc...) asparagine" evidence="2">
    <location>
        <position position="108"/>
    </location>
</feature>
<feature type="glycosylation site" description="N-linked (GlcNAc...) asparagine" evidence="2">
    <location>
        <position position="208"/>
    </location>
</feature>
<feature type="glycosylation site" description="N-linked (GlcNAc...) asparagine" evidence="2">
    <location>
        <position position="269"/>
    </location>
</feature>
<feature type="glycosylation site" description="N-linked (GlcNAc...) asparagine" evidence="2">
    <location>
        <position position="453"/>
    </location>
</feature>
<feature type="glycosylation site" description="N-linked (GlcNAc...) asparagine" evidence="2">
    <location>
        <position position="594"/>
    </location>
</feature>
<feature type="glycosylation site" description="N-linked (GlcNAc...) asparagine" evidence="2">
    <location>
        <position position="624"/>
    </location>
</feature>
<feature type="glycosylation site" description="N-linked (GlcNAc...) asparagine" evidence="2">
    <location>
        <position position="681"/>
    </location>
</feature>
<feature type="glycosylation site" description="N-linked (GlcNAc...) asparagine" evidence="2">
    <location>
        <position position="703"/>
    </location>
</feature>
<feature type="glycosylation site" description="N-linked (GlcNAc...) asparagine" evidence="2">
    <location>
        <position position="782"/>
    </location>
</feature>
<feature type="glycosylation site" description="N-linked (GlcNAc...) asparagine" evidence="2">
    <location>
        <position position="788"/>
    </location>
</feature>
<feature type="glycosylation site" description="N-linked (GlcNAc...) asparagine" evidence="2">
    <location>
        <position position="816"/>
    </location>
</feature>
<feature type="glycosylation site" description="N-linked (GlcNAc...) asparagine" evidence="2">
    <location>
        <position position="826"/>
    </location>
</feature>
<feature type="glycosylation site" description="N-linked (GlcNAc...) asparagine" evidence="2">
    <location>
        <position position="879"/>
    </location>
</feature>
<feature type="disulfide bond" evidence="1">
    <location>
        <begin position="268"/>
        <end position="321"/>
    </location>
</feature>
<organism>
    <name type="scientific">Sclerotinia sclerotiorum (strain ATCC 18683 / 1980 / Ss-1)</name>
    <name type="common">White mold</name>
    <name type="synonym">Whetzelinia sclerotiorum</name>
    <dbReference type="NCBI Taxonomy" id="665079"/>
    <lineage>
        <taxon>Eukaryota</taxon>
        <taxon>Fungi</taxon>
        <taxon>Dikarya</taxon>
        <taxon>Ascomycota</taxon>
        <taxon>Pezizomycotina</taxon>
        <taxon>Leotiomycetes</taxon>
        <taxon>Helotiales</taxon>
        <taxon>Sclerotiniaceae</taxon>
        <taxon>Sclerotinia</taxon>
    </lineage>
</organism>
<proteinExistence type="inferred from homology"/>
<accession>A7EBU5</accession>
<reference key="1">
    <citation type="journal article" date="2011" name="PLoS Genet.">
        <title>Genomic analysis of the necrotrophic fungal pathogens Sclerotinia sclerotiorum and Botrytis cinerea.</title>
        <authorList>
            <person name="Amselem J."/>
            <person name="Cuomo C.A."/>
            <person name="van Kan J.A.L."/>
            <person name="Viaud M."/>
            <person name="Benito E.P."/>
            <person name="Couloux A."/>
            <person name="Coutinho P.M."/>
            <person name="de Vries R.P."/>
            <person name="Dyer P.S."/>
            <person name="Fillinger S."/>
            <person name="Fournier E."/>
            <person name="Gout L."/>
            <person name="Hahn M."/>
            <person name="Kohn L."/>
            <person name="Lapalu N."/>
            <person name="Plummer K.M."/>
            <person name="Pradier J.-M."/>
            <person name="Quevillon E."/>
            <person name="Sharon A."/>
            <person name="Simon A."/>
            <person name="ten Have A."/>
            <person name="Tudzynski B."/>
            <person name="Tudzynski P."/>
            <person name="Wincker P."/>
            <person name="Andrew M."/>
            <person name="Anthouard V."/>
            <person name="Beever R.E."/>
            <person name="Beffa R."/>
            <person name="Benoit I."/>
            <person name="Bouzid O."/>
            <person name="Brault B."/>
            <person name="Chen Z."/>
            <person name="Choquer M."/>
            <person name="Collemare J."/>
            <person name="Cotton P."/>
            <person name="Danchin E.G."/>
            <person name="Da Silva C."/>
            <person name="Gautier A."/>
            <person name="Giraud C."/>
            <person name="Giraud T."/>
            <person name="Gonzalez C."/>
            <person name="Grossetete S."/>
            <person name="Gueldener U."/>
            <person name="Henrissat B."/>
            <person name="Howlett B.J."/>
            <person name="Kodira C."/>
            <person name="Kretschmer M."/>
            <person name="Lappartient A."/>
            <person name="Leroch M."/>
            <person name="Levis C."/>
            <person name="Mauceli E."/>
            <person name="Neuveglise C."/>
            <person name="Oeser B."/>
            <person name="Pearson M."/>
            <person name="Poulain J."/>
            <person name="Poussereau N."/>
            <person name="Quesneville H."/>
            <person name="Rascle C."/>
            <person name="Schumacher J."/>
            <person name="Segurens B."/>
            <person name="Sexton A."/>
            <person name="Silva E."/>
            <person name="Sirven C."/>
            <person name="Soanes D.M."/>
            <person name="Talbot N.J."/>
            <person name="Templeton M."/>
            <person name="Yandava C."/>
            <person name="Yarden O."/>
            <person name="Zeng Q."/>
            <person name="Rollins J.A."/>
            <person name="Lebrun M.-H."/>
            <person name="Dickman M."/>
        </authorList>
    </citation>
    <scope>NUCLEOTIDE SEQUENCE [LARGE SCALE GENOMIC DNA]</scope>
    <source>
        <strain>ATCC 18683 / 1980 / Ss-1</strain>
    </source>
</reference>
<dbReference type="EC" id="3.2.1.23"/>
<dbReference type="EMBL" id="CH476623">
    <property type="protein sequence ID" value="EDN99923.1"/>
    <property type="molecule type" value="Genomic_DNA"/>
</dbReference>
<dbReference type="RefSeq" id="XP_001596561.1">
    <property type="nucleotide sequence ID" value="XM_001596511.1"/>
</dbReference>
<dbReference type="SMR" id="A7EBU5"/>
<dbReference type="GlyCosmos" id="A7EBU5">
    <property type="glycosylation" value="15 sites, No reported glycans"/>
</dbReference>
<dbReference type="EnsemblFungi" id="EDN99923">
    <property type="protein sequence ID" value="EDN99923"/>
    <property type="gene ID" value="SS1G_02781"/>
</dbReference>
<dbReference type="GeneID" id="5492844"/>
<dbReference type="KEGG" id="ssl:SS1G_02781"/>
<dbReference type="VEuPathDB" id="FungiDB:sscle_04g037140"/>
<dbReference type="eggNOG" id="KOG0496">
    <property type="taxonomic scope" value="Eukaryota"/>
</dbReference>
<dbReference type="HOGENOM" id="CLU_005732_2_1_1"/>
<dbReference type="InParanoid" id="A7EBU5"/>
<dbReference type="OMA" id="GGCPGDI"/>
<dbReference type="OrthoDB" id="1657402at2759"/>
<dbReference type="Proteomes" id="UP000001312">
    <property type="component" value="Unassembled WGS sequence"/>
</dbReference>
<dbReference type="GO" id="GO:0005576">
    <property type="term" value="C:extracellular region"/>
    <property type="evidence" value="ECO:0007669"/>
    <property type="project" value="UniProtKB-SubCell"/>
</dbReference>
<dbReference type="GO" id="GO:0005773">
    <property type="term" value="C:vacuole"/>
    <property type="evidence" value="ECO:0000318"/>
    <property type="project" value="GO_Central"/>
</dbReference>
<dbReference type="GO" id="GO:0004565">
    <property type="term" value="F:beta-galactosidase activity"/>
    <property type="evidence" value="ECO:0000318"/>
    <property type="project" value="GO_Central"/>
</dbReference>
<dbReference type="GO" id="GO:0019388">
    <property type="term" value="P:galactose catabolic process"/>
    <property type="evidence" value="ECO:0000318"/>
    <property type="project" value="GO_Central"/>
</dbReference>
<dbReference type="GO" id="GO:0000272">
    <property type="term" value="P:polysaccharide catabolic process"/>
    <property type="evidence" value="ECO:0007669"/>
    <property type="project" value="UniProtKB-KW"/>
</dbReference>
<dbReference type="FunFam" id="2.102.20.10:FF:000001">
    <property type="entry name" value="Beta-galactosidase A"/>
    <property type="match status" value="1"/>
</dbReference>
<dbReference type="FunFam" id="3.20.20.80:FF:000040">
    <property type="entry name" value="Beta-galactosidase A"/>
    <property type="match status" value="1"/>
</dbReference>
<dbReference type="FunFam" id="2.60.120.260:FF:000138">
    <property type="entry name" value="Probable beta-galactosidase B"/>
    <property type="match status" value="1"/>
</dbReference>
<dbReference type="Gene3D" id="2.102.20.10">
    <property type="entry name" value="Beta-galactosidase, domain 2"/>
    <property type="match status" value="1"/>
</dbReference>
<dbReference type="Gene3D" id="2.60.390.10">
    <property type="entry name" value="Beta-galactosidase, domain 3"/>
    <property type="match status" value="1"/>
</dbReference>
<dbReference type="Gene3D" id="2.60.120.260">
    <property type="entry name" value="Galactose-binding domain-like"/>
    <property type="match status" value="2"/>
</dbReference>
<dbReference type="Gene3D" id="3.20.20.80">
    <property type="entry name" value="Glycosidases"/>
    <property type="match status" value="1"/>
</dbReference>
<dbReference type="InterPro" id="IPR018954">
    <property type="entry name" value="Betagal_dom2"/>
</dbReference>
<dbReference type="InterPro" id="IPR037110">
    <property type="entry name" value="Betagal_dom2_sf"/>
</dbReference>
<dbReference type="InterPro" id="IPR025972">
    <property type="entry name" value="BetaGal_dom3"/>
</dbReference>
<dbReference type="InterPro" id="IPR036833">
    <property type="entry name" value="BetaGal_dom3_sf"/>
</dbReference>
<dbReference type="InterPro" id="IPR025300">
    <property type="entry name" value="BetaGal_jelly_roll_dom"/>
</dbReference>
<dbReference type="InterPro" id="IPR008979">
    <property type="entry name" value="Galactose-bd-like_sf"/>
</dbReference>
<dbReference type="InterPro" id="IPR031330">
    <property type="entry name" value="Gly_Hdrlase_35_cat"/>
</dbReference>
<dbReference type="InterPro" id="IPR001944">
    <property type="entry name" value="Glycoside_Hdrlase_35"/>
</dbReference>
<dbReference type="InterPro" id="IPR017853">
    <property type="entry name" value="Glycoside_hydrolase_SF"/>
</dbReference>
<dbReference type="PANTHER" id="PTHR23421">
    <property type="entry name" value="BETA-GALACTOSIDASE RELATED"/>
    <property type="match status" value="1"/>
</dbReference>
<dbReference type="Pfam" id="PF13364">
    <property type="entry name" value="BetaGal_ABD2"/>
    <property type="match status" value="2"/>
</dbReference>
<dbReference type="Pfam" id="PF10435">
    <property type="entry name" value="BetaGal_dom2"/>
    <property type="match status" value="1"/>
</dbReference>
<dbReference type="Pfam" id="PF13363">
    <property type="entry name" value="BetaGal_dom3"/>
    <property type="match status" value="1"/>
</dbReference>
<dbReference type="Pfam" id="PF01301">
    <property type="entry name" value="Glyco_hydro_35"/>
    <property type="match status" value="1"/>
</dbReference>
<dbReference type="PRINTS" id="PR00742">
    <property type="entry name" value="GLHYDRLASE35"/>
</dbReference>
<dbReference type="SMART" id="SM01029">
    <property type="entry name" value="BetaGal_dom2"/>
    <property type="match status" value="1"/>
</dbReference>
<dbReference type="SUPFAM" id="SSF51445">
    <property type="entry name" value="(Trans)glycosidases"/>
    <property type="match status" value="1"/>
</dbReference>
<dbReference type="SUPFAM" id="SSF117100">
    <property type="entry name" value="Beta-galactosidase LacA, domain 3"/>
    <property type="match status" value="1"/>
</dbReference>
<dbReference type="SUPFAM" id="SSF49785">
    <property type="entry name" value="Galactose-binding domain-like"/>
    <property type="match status" value="2"/>
</dbReference>
<dbReference type="SUPFAM" id="SSF51011">
    <property type="entry name" value="Glycosyl hydrolase domain"/>
    <property type="match status" value="1"/>
</dbReference>
<sequence>MLLQSLFAWALAIGPCIAQNSTNSTWPIHNNGLTTQVEWDHYSLMVDGQRFFLWSGEFHYWRIPVPELWVDVLQKVKAAGFNTFAIYTHWYFHNPNPNTLDFENAAHNFTKIFDLAKELGMFVVFRPGPYVNAESNAGAFPLWLTTGAYGALRNNDERYTEAWTPFWEKVASIVAPYQFTNGGNVLTYQIENELGSQWRGTPSNKVPNLSSVEYMEALEASARAHGITIPFQANDPNLNSDSWSKDFYDGYGSVDIYGMDSYPACWTCNLTECDSTNGAYKAFNVIDYYDHFEAISPTQPSFLPEFQGGSFNPWGGPEGGCPENSPADFANLFYRNNVGQRVTAMSLYMIYGGTNWGWLAAPVVATSYDYSSPISENRMINDKYAETKLFGHFLRVAKDLTKTDRIGTGKTASTNPNVVYSEIRNPDTNAAFYVTIHKESTVGTREEFYINANTSKGAFKIPQKAASIVLNGFQSKIIVTDFNFGSHSLLYSTAEVLSHSIVDDQDILALWMPTGEAGEFVVTGAKSGSVSSCGGCSSVGFYPQGDDLLVTISQSKGISVLTFDDGLRVLVMDRSFAYEFWVPVLTADPFSPANETVFVQGPSLVRSAAYSSDGSTLDLTGDNNGTSTQIQVFPPKSVSKVTWNGQVITTEKTDYDSLIGSLTGPALDSLTLPTISGWKANDSLPERLPTYDDSWWVAADHMNTSNPTKPETLPVLYIDDYGYHVGNHLWRGRFEGSASGVYLSVTGGRAFGYSAWLNGEFIGSYLGAAYPDTGKLTLSFSNVTVNSNSTNILLVLQDNSGHDETSEALNPRGINNATLISSSTKNFTSWKVTGTAGKPDTAIDPVRGILSEGGLYAERLGWHLPDFDDSEWSSASPSNVSSSAGVTFYRTTVSLAIPTGLDVAISFTLKASPSNAALRVLLFVNGYQYGRFSPWIGNQVEFPVPPGILNYDGDNVIGLSVWRQEEGDESMGVNVGWKVTEAFASSFEPIFDAAYLQPGWTDERLQYA</sequence>
<protein>
    <recommendedName>
        <fullName>Probable beta-galactosidase B</fullName>
        <ecNumber>3.2.1.23</ecNumber>
    </recommendedName>
    <alternativeName>
        <fullName>Lactase B</fullName>
    </alternativeName>
</protein>